<keyword id="KW-0963">Cytoplasm</keyword>
<keyword id="KW-0251">Elongation factor</keyword>
<keyword id="KW-0648">Protein biosynthesis</keyword>
<keyword id="KW-1185">Reference proteome</keyword>
<evidence type="ECO:0000255" key="1">
    <source>
        <dbReference type="HAMAP-Rule" id="MF_00141"/>
    </source>
</evidence>
<comment type="function">
    <text evidence="1">Involved in peptide bond synthesis. Stimulates efficient translation and peptide-bond synthesis on native or reconstituted 70S ribosomes in vitro. Probably functions indirectly by altering the affinity of the ribosome for aminoacyl-tRNA, thus increasing their reactivity as acceptors for peptidyl transferase.</text>
</comment>
<comment type="pathway">
    <text evidence="1">Protein biosynthesis; polypeptide chain elongation.</text>
</comment>
<comment type="subcellular location">
    <subcellularLocation>
        <location evidence="1">Cytoplasm</location>
    </subcellularLocation>
</comment>
<comment type="similarity">
    <text evidence="1">Belongs to the elongation factor P family.</text>
</comment>
<accession>Q8DJD3</accession>
<dbReference type="EMBL" id="BA000039">
    <property type="protein sequence ID" value="BAC08846.1"/>
    <property type="molecule type" value="Genomic_DNA"/>
</dbReference>
<dbReference type="RefSeq" id="NP_682084.1">
    <property type="nucleotide sequence ID" value="NC_004113.1"/>
</dbReference>
<dbReference type="RefSeq" id="WP_011057134.1">
    <property type="nucleotide sequence ID" value="NC_004113.1"/>
</dbReference>
<dbReference type="SMR" id="Q8DJD3"/>
<dbReference type="STRING" id="197221.gene:10747891"/>
<dbReference type="EnsemblBacteria" id="BAC08846">
    <property type="protein sequence ID" value="BAC08846"/>
    <property type="gene ID" value="BAC08846"/>
</dbReference>
<dbReference type="KEGG" id="tel:tlr1294"/>
<dbReference type="PATRIC" id="fig|197221.4.peg.1362"/>
<dbReference type="eggNOG" id="COG0231">
    <property type="taxonomic scope" value="Bacteria"/>
</dbReference>
<dbReference type="UniPathway" id="UPA00345"/>
<dbReference type="Proteomes" id="UP000000440">
    <property type="component" value="Chromosome"/>
</dbReference>
<dbReference type="GO" id="GO:0005737">
    <property type="term" value="C:cytoplasm"/>
    <property type="evidence" value="ECO:0007669"/>
    <property type="project" value="UniProtKB-SubCell"/>
</dbReference>
<dbReference type="GO" id="GO:0003746">
    <property type="term" value="F:translation elongation factor activity"/>
    <property type="evidence" value="ECO:0007669"/>
    <property type="project" value="UniProtKB-UniRule"/>
</dbReference>
<dbReference type="GO" id="GO:0043043">
    <property type="term" value="P:peptide biosynthetic process"/>
    <property type="evidence" value="ECO:0007669"/>
    <property type="project" value="InterPro"/>
</dbReference>
<dbReference type="CDD" id="cd04470">
    <property type="entry name" value="S1_EF-P_repeat_1"/>
    <property type="match status" value="1"/>
</dbReference>
<dbReference type="CDD" id="cd05794">
    <property type="entry name" value="S1_EF-P_repeat_2"/>
    <property type="match status" value="1"/>
</dbReference>
<dbReference type="FunFam" id="2.30.30.30:FF:000003">
    <property type="entry name" value="Elongation factor P"/>
    <property type="match status" value="1"/>
</dbReference>
<dbReference type="FunFam" id="2.40.50.140:FF:000004">
    <property type="entry name" value="Elongation factor P"/>
    <property type="match status" value="1"/>
</dbReference>
<dbReference type="FunFam" id="2.40.50.140:FF:000009">
    <property type="entry name" value="Elongation factor P"/>
    <property type="match status" value="1"/>
</dbReference>
<dbReference type="Gene3D" id="2.30.30.30">
    <property type="match status" value="1"/>
</dbReference>
<dbReference type="Gene3D" id="2.40.50.140">
    <property type="entry name" value="Nucleic acid-binding proteins"/>
    <property type="match status" value="2"/>
</dbReference>
<dbReference type="HAMAP" id="MF_00141">
    <property type="entry name" value="EF_P"/>
    <property type="match status" value="1"/>
</dbReference>
<dbReference type="InterPro" id="IPR015365">
    <property type="entry name" value="Elong-fact-P_C"/>
</dbReference>
<dbReference type="InterPro" id="IPR012340">
    <property type="entry name" value="NA-bd_OB-fold"/>
</dbReference>
<dbReference type="InterPro" id="IPR014722">
    <property type="entry name" value="Rib_uL2_dom2"/>
</dbReference>
<dbReference type="InterPro" id="IPR020599">
    <property type="entry name" value="Transl_elong_fac_P/YeiP"/>
</dbReference>
<dbReference type="InterPro" id="IPR013185">
    <property type="entry name" value="Transl_elong_KOW-like"/>
</dbReference>
<dbReference type="InterPro" id="IPR001059">
    <property type="entry name" value="Transl_elong_P/YeiP_cen"/>
</dbReference>
<dbReference type="InterPro" id="IPR013852">
    <property type="entry name" value="Transl_elong_P/YeiP_CS"/>
</dbReference>
<dbReference type="InterPro" id="IPR011768">
    <property type="entry name" value="Transl_elongation_fac_P"/>
</dbReference>
<dbReference type="InterPro" id="IPR008991">
    <property type="entry name" value="Translation_prot_SH3-like_sf"/>
</dbReference>
<dbReference type="NCBIfam" id="TIGR00038">
    <property type="entry name" value="efp"/>
    <property type="match status" value="1"/>
</dbReference>
<dbReference type="NCBIfam" id="NF001810">
    <property type="entry name" value="PRK00529.1"/>
    <property type="match status" value="1"/>
</dbReference>
<dbReference type="PANTHER" id="PTHR30053">
    <property type="entry name" value="ELONGATION FACTOR P"/>
    <property type="match status" value="1"/>
</dbReference>
<dbReference type="PANTHER" id="PTHR30053:SF12">
    <property type="entry name" value="ELONGATION FACTOR P (EF-P) FAMILY PROTEIN"/>
    <property type="match status" value="1"/>
</dbReference>
<dbReference type="Pfam" id="PF01132">
    <property type="entry name" value="EFP"/>
    <property type="match status" value="1"/>
</dbReference>
<dbReference type="Pfam" id="PF08207">
    <property type="entry name" value="EFP_N"/>
    <property type="match status" value="1"/>
</dbReference>
<dbReference type="Pfam" id="PF09285">
    <property type="entry name" value="Elong-fact-P_C"/>
    <property type="match status" value="1"/>
</dbReference>
<dbReference type="PIRSF" id="PIRSF005901">
    <property type="entry name" value="EF-P"/>
    <property type="match status" value="1"/>
</dbReference>
<dbReference type="SMART" id="SM01185">
    <property type="entry name" value="EFP"/>
    <property type="match status" value="1"/>
</dbReference>
<dbReference type="SMART" id="SM00841">
    <property type="entry name" value="Elong-fact-P_C"/>
    <property type="match status" value="1"/>
</dbReference>
<dbReference type="SUPFAM" id="SSF50249">
    <property type="entry name" value="Nucleic acid-binding proteins"/>
    <property type="match status" value="2"/>
</dbReference>
<dbReference type="SUPFAM" id="SSF50104">
    <property type="entry name" value="Translation proteins SH3-like domain"/>
    <property type="match status" value="1"/>
</dbReference>
<dbReference type="PROSITE" id="PS01275">
    <property type="entry name" value="EFP"/>
    <property type="match status" value="1"/>
</dbReference>
<reference key="1">
    <citation type="journal article" date="2002" name="DNA Res.">
        <title>Complete genome structure of the thermophilic cyanobacterium Thermosynechococcus elongatus BP-1.</title>
        <authorList>
            <person name="Nakamura Y."/>
            <person name="Kaneko T."/>
            <person name="Sato S."/>
            <person name="Ikeuchi M."/>
            <person name="Katoh H."/>
            <person name="Sasamoto S."/>
            <person name="Watanabe A."/>
            <person name="Iriguchi M."/>
            <person name="Kawashima K."/>
            <person name="Kimura T."/>
            <person name="Kishida Y."/>
            <person name="Kiyokawa C."/>
            <person name="Kohara M."/>
            <person name="Matsumoto M."/>
            <person name="Matsuno A."/>
            <person name="Nakazaki N."/>
            <person name="Shimpo S."/>
            <person name="Sugimoto M."/>
            <person name="Takeuchi C."/>
            <person name="Yamada M."/>
            <person name="Tabata S."/>
        </authorList>
    </citation>
    <scope>NUCLEOTIDE SEQUENCE [LARGE SCALE GENOMIC DNA]</scope>
    <source>
        <strain>NIES-2133 / IAM M-273 / BP-1</strain>
    </source>
</reference>
<gene>
    <name evidence="1" type="primary">efp</name>
    <name type="ordered locus">tlr1294</name>
</gene>
<organism>
    <name type="scientific">Thermosynechococcus vestitus (strain NIES-2133 / IAM M-273 / BP-1)</name>
    <dbReference type="NCBI Taxonomy" id="197221"/>
    <lineage>
        <taxon>Bacteria</taxon>
        <taxon>Bacillati</taxon>
        <taxon>Cyanobacteriota</taxon>
        <taxon>Cyanophyceae</taxon>
        <taxon>Acaryochloridales</taxon>
        <taxon>Thermosynechococcaceae</taxon>
        <taxon>Thermosynechococcus</taxon>
    </lineage>
</organism>
<protein>
    <recommendedName>
        <fullName evidence="1">Elongation factor P</fullName>
        <shortName evidence="1">EF-P</shortName>
    </recommendedName>
</protein>
<proteinExistence type="inferred from homology"/>
<name>EFP_THEVB</name>
<feature type="chain" id="PRO_0000094350" description="Elongation factor P">
    <location>
        <begin position="1"/>
        <end position="185"/>
    </location>
</feature>
<sequence length="185" mass="20563">MISSNDFRPGVSIELDGAVWRVVEFLHVKPGKGSAFVRTKLKNVQTGNVIERTFRAGETVPQATLEKRTMQHTYKDGEDYVFMDMESYEEARLTPAQVGDRAKYLKEGMEVNIVKWGEQVLEVELPNSVVLEVVQTDPGVKGDTATGGSKPAIVETGAQVMVPLFISVGERIRIDTRSDTYLGRE</sequence>